<reference key="1">
    <citation type="submission" date="2009-05" db="EMBL/GenBank/DDBJ databases">
        <title>Complete sequence of Tolumonas auensis DSM 9187.</title>
        <authorList>
            <consortium name="US DOE Joint Genome Institute"/>
            <person name="Lucas S."/>
            <person name="Copeland A."/>
            <person name="Lapidus A."/>
            <person name="Glavina del Rio T."/>
            <person name="Tice H."/>
            <person name="Bruce D."/>
            <person name="Goodwin L."/>
            <person name="Pitluck S."/>
            <person name="Chertkov O."/>
            <person name="Brettin T."/>
            <person name="Detter J.C."/>
            <person name="Han C."/>
            <person name="Larimer F."/>
            <person name="Land M."/>
            <person name="Hauser L."/>
            <person name="Kyrpides N."/>
            <person name="Mikhailova N."/>
            <person name="Spring S."/>
            <person name="Beller H."/>
        </authorList>
    </citation>
    <scope>NUCLEOTIDE SEQUENCE [LARGE SCALE GENOMIC DNA]</scope>
    <source>
        <strain>DSM 9187 / NBRC 110442 / TA 4</strain>
    </source>
</reference>
<dbReference type="EMBL" id="CP001616">
    <property type="protein sequence ID" value="ACQ92450.1"/>
    <property type="molecule type" value="Genomic_DNA"/>
</dbReference>
<dbReference type="RefSeq" id="WP_012729049.1">
    <property type="nucleotide sequence ID" value="NC_012691.1"/>
</dbReference>
<dbReference type="SMR" id="C4LBL5"/>
<dbReference type="STRING" id="595494.Tola_0822"/>
<dbReference type="KEGG" id="tau:Tola_0822"/>
<dbReference type="eggNOG" id="COG0216">
    <property type="taxonomic scope" value="Bacteria"/>
</dbReference>
<dbReference type="HOGENOM" id="CLU_036856_0_1_6"/>
<dbReference type="OrthoDB" id="9806673at2"/>
<dbReference type="Proteomes" id="UP000009073">
    <property type="component" value="Chromosome"/>
</dbReference>
<dbReference type="GO" id="GO:0005737">
    <property type="term" value="C:cytoplasm"/>
    <property type="evidence" value="ECO:0007669"/>
    <property type="project" value="UniProtKB-SubCell"/>
</dbReference>
<dbReference type="GO" id="GO:0016149">
    <property type="term" value="F:translation release factor activity, codon specific"/>
    <property type="evidence" value="ECO:0007669"/>
    <property type="project" value="UniProtKB-UniRule"/>
</dbReference>
<dbReference type="FunFam" id="3.30.160.20:FF:000004">
    <property type="entry name" value="Peptide chain release factor 1"/>
    <property type="match status" value="1"/>
</dbReference>
<dbReference type="FunFam" id="3.30.70.1660:FF:000002">
    <property type="entry name" value="Peptide chain release factor 1"/>
    <property type="match status" value="1"/>
</dbReference>
<dbReference type="FunFam" id="3.30.70.1660:FF:000004">
    <property type="entry name" value="Peptide chain release factor 1"/>
    <property type="match status" value="1"/>
</dbReference>
<dbReference type="Gene3D" id="3.30.160.20">
    <property type="match status" value="1"/>
</dbReference>
<dbReference type="Gene3D" id="3.30.70.1660">
    <property type="match status" value="1"/>
</dbReference>
<dbReference type="Gene3D" id="6.10.140.1950">
    <property type="match status" value="1"/>
</dbReference>
<dbReference type="HAMAP" id="MF_00093">
    <property type="entry name" value="Rel_fac_1"/>
    <property type="match status" value="1"/>
</dbReference>
<dbReference type="InterPro" id="IPR005139">
    <property type="entry name" value="PCRF"/>
</dbReference>
<dbReference type="InterPro" id="IPR000352">
    <property type="entry name" value="Pep_chain_release_fac_I"/>
</dbReference>
<dbReference type="InterPro" id="IPR045853">
    <property type="entry name" value="Pep_chain_release_fac_I_sf"/>
</dbReference>
<dbReference type="InterPro" id="IPR050057">
    <property type="entry name" value="Prokaryotic/Mito_RF"/>
</dbReference>
<dbReference type="InterPro" id="IPR004373">
    <property type="entry name" value="RF-1"/>
</dbReference>
<dbReference type="NCBIfam" id="TIGR00019">
    <property type="entry name" value="prfA"/>
    <property type="match status" value="1"/>
</dbReference>
<dbReference type="NCBIfam" id="NF001859">
    <property type="entry name" value="PRK00591.1"/>
    <property type="match status" value="1"/>
</dbReference>
<dbReference type="PANTHER" id="PTHR43804">
    <property type="entry name" value="LD18447P"/>
    <property type="match status" value="1"/>
</dbReference>
<dbReference type="PANTHER" id="PTHR43804:SF7">
    <property type="entry name" value="LD18447P"/>
    <property type="match status" value="1"/>
</dbReference>
<dbReference type="Pfam" id="PF03462">
    <property type="entry name" value="PCRF"/>
    <property type="match status" value="1"/>
</dbReference>
<dbReference type="Pfam" id="PF00472">
    <property type="entry name" value="RF-1"/>
    <property type="match status" value="1"/>
</dbReference>
<dbReference type="SMART" id="SM00937">
    <property type="entry name" value="PCRF"/>
    <property type="match status" value="1"/>
</dbReference>
<dbReference type="SUPFAM" id="SSF75620">
    <property type="entry name" value="Release factor"/>
    <property type="match status" value="1"/>
</dbReference>
<dbReference type="PROSITE" id="PS00745">
    <property type="entry name" value="RF_PROK_I"/>
    <property type="match status" value="1"/>
</dbReference>
<name>RF1_TOLAT</name>
<sequence length="362" mass="40787">MKETVIRKLEGLMERYEEVQALLGEPNVVSDQDKFRALTREYSQLGEVVAGFQQYQQAEADLQAIEEMLSGDDAEMKAMAQEELAEAKQLIERVEAELQVLLLPKDPKDDSNCFLEIRAGAGGDEAAIFAGDLFRMYSKYSERRGWRMEIMSTSDGEHGGYKEIIVRMEGDSVYGIMKFESGGHRVQRVPETESQGRVHTSACTVMVLPEIPEKEIPEINPADLRIDTFRASGAGGQHINKTDSAIRITHIPTGTVVECQDERSQHKNKARAMSVLAARLAQQEEDKRRAEADSTRRSILSTGDRSDRIRTYNYPQGRVSDHRINLTLYRLSEVMEGDLDSLLKPLQQEYQADQLAALSENN</sequence>
<organism>
    <name type="scientific">Tolumonas auensis (strain DSM 9187 / NBRC 110442 / TA 4)</name>
    <dbReference type="NCBI Taxonomy" id="595494"/>
    <lineage>
        <taxon>Bacteria</taxon>
        <taxon>Pseudomonadati</taxon>
        <taxon>Pseudomonadota</taxon>
        <taxon>Gammaproteobacteria</taxon>
        <taxon>Aeromonadales</taxon>
        <taxon>Aeromonadaceae</taxon>
        <taxon>Tolumonas</taxon>
    </lineage>
</organism>
<accession>C4LBL5</accession>
<protein>
    <recommendedName>
        <fullName evidence="1">Peptide chain release factor 1</fullName>
        <shortName evidence="1">RF-1</shortName>
    </recommendedName>
</protein>
<keyword id="KW-0963">Cytoplasm</keyword>
<keyword id="KW-0488">Methylation</keyword>
<keyword id="KW-0648">Protein biosynthesis</keyword>
<keyword id="KW-1185">Reference proteome</keyword>
<proteinExistence type="inferred from homology"/>
<gene>
    <name evidence="1" type="primary">prfA</name>
    <name type="ordered locus">Tola_0822</name>
</gene>
<evidence type="ECO:0000255" key="1">
    <source>
        <dbReference type="HAMAP-Rule" id="MF_00093"/>
    </source>
</evidence>
<evidence type="ECO:0000256" key="2">
    <source>
        <dbReference type="SAM" id="MobiDB-lite"/>
    </source>
</evidence>
<feature type="chain" id="PRO_1000202705" description="Peptide chain release factor 1">
    <location>
        <begin position="1"/>
        <end position="362"/>
    </location>
</feature>
<feature type="region of interest" description="Disordered" evidence="2">
    <location>
        <begin position="282"/>
        <end position="304"/>
    </location>
</feature>
<feature type="compositionally biased region" description="Basic and acidic residues" evidence="2">
    <location>
        <begin position="282"/>
        <end position="296"/>
    </location>
</feature>
<feature type="modified residue" description="N5-methylglutamine" evidence="1">
    <location>
        <position position="237"/>
    </location>
</feature>
<comment type="function">
    <text evidence="1">Peptide chain release factor 1 directs the termination of translation in response to the peptide chain termination codons UAG and UAA.</text>
</comment>
<comment type="subcellular location">
    <subcellularLocation>
        <location evidence="1">Cytoplasm</location>
    </subcellularLocation>
</comment>
<comment type="PTM">
    <text evidence="1">Methylated by PrmC. Methylation increases the termination efficiency of RF1.</text>
</comment>
<comment type="similarity">
    <text evidence="1">Belongs to the prokaryotic/mitochondrial release factor family.</text>
</comment>